<gene>
    <name evidence="3 4" type="primary">NRAMP3.1</name>
    <name evidence="5" type="ordered locus">Potri.007G050700</name>
</gene>
<proteinExistence type="evidence at protein level"/>
<reference key="1">
    <citation type="journal article" date="2006" name="Science">
        <title>The genome of black cottonwood, Populus trichocarpa (Torr. &amp; Gray).</title>
        <authorList>
            <person name="Tuskan G.A."/>
            <person name="Difazio S."/>
            <person name="Jansson S."/>
            <person name="Bohlmann J."/>
            <person name="Grigoriev I."/>
            <person name="Hellsten U."/>
            <person name="Putnam N."/>
            <person name="Ralph S."/>
            <person name="Rombauts S."/>
            <person name="Salamov A."/>
            <person name="Schein J."/>
            <person name="Sterck L."/>
            <person name="Aerts A."/>
            <person name="Bhalerao R.R."/>
            <person name="Bhalerao R.P."/>
            <person name="Blaudez D."/>
            <person name="Boerjan W."/>
            <person name="Brun A."/>
            <person name="Brunner A."/>
            <person name="Busov V."/>
            <person name="Campbell M."/>
            <person name="Carlson J."/>
            <person name="Chalot M."/>
            <person name="Chapman J."/>
            <person name="Chen G.-L."/>
            <person name="Cooper D."/>
            <person name="Coutinho P.M."/>
            <person name="Couturier J."/>
            <person name="Covert S."/>
            <person name="Cronk Q."/>
            <person name="Cunningham R."/>
            <person name="Davis J."/>
            <person name="Degroeve S."/>
            <person name="Dejardin A."/>
            <person name="dePamphilis C.W."/>
            <person name="Detter J."/>
            <person name="Dirks B."/>
            <person name="Dubchak I."/>
            <person name="Duplessis S."/>
            <person name="Ehlting J."/>
            <person name="Ellis B."/>
            <person name="Gendler K."/>
            <person name="Goodstein D."/>
            <person name="Gribskov M."/>
            <person name="Grimwood J."/>
            <person name="Groover A."/>
            <person name="Gunter L."/>
            <person name="Hamberger B."/>
            <person name="Heinze B."/>
            <person name="Helariutta Y."/>
            <person name="Henrissat B."/>
            <person name="Holligan D."/>
            <person name="Holt R."/>
            <person name="Huang W."/>
            <person name="Islam-Faridi N."/>
            <person name="Jones S."/>
            <person name="Jones-Rhoades M."/>
            <person name="Jorgensen R."/>
            <person name="Joshi C."/>
            <person name="Kangasjaervi J."/>
            <person name="Karlsson J."/>
            <person name="Kelleher C."/>
            <person name="Kirkpatrick R."/>
            <person name="Kirst M."/>
            <person name="Kohler A."/>
            <person name="Kalluri U."/>
            <person name="Larimer F."/>
            <person name="Leebens-Mack J."/>
            <person name="Leple J.-C."/>
            <person name="Locascio P."/>
            <person name="Lou Y."/>
            <person name="Lucas S."/>
            <person name="Martin F."/>
            <person name="Montanini B."/>
            <person name="Napoli C."/>
            <person name="Nelson D.R."/>
            <person name="Nelson C."/>
            <person name="Nieminen K."/>
            <person name="Nilsson O."/>
            <person name="Pereda V."/>
            <person name="Peter G."/>
            <person name="Philippe R."/>
            <person name="Pilate G."/>
            <person name="Poliakov A."/>
            <person name="Razumovskaya J."/>
            <person name="Richardson P."/>
            <person name="Rinaldi C."/>
            <person name="Ritland K."/>
            <person name="Rouze P."/>
            <person name="Ryaboy D."/>
            <person name="Schmutz J."/>
            <person name="Schrader J."/>
            <person name="Segerman B."/>
            <person name="Shin H."/>
            <person name="Siddiqui A."/>
            <person name="Sterky F."/>
            <person name="Terry A."/>
            <person name="Tsai C.-J."/>
            <person name="Uberbacher E."/>
            <person name="Unneberg P."/>
            <person name="Vahala J."/>
            <person name="Wall K."/>
            <person name="Wessler S."/>
            <person name="Yang G."/>
            <person name="Yin T."/>
            <person name="Douglas C."/>
            <person name="Marra M."/>
            <person name="Sandberg G."/>
            <person name="Van de Peer Y."/>
            <person name="Rokhsar D.S."/>
        </authorList>
    </citation>
    <scope>NUCLEOTIDE SEQUENCE [LARGE SCALE GENOMIC DNA]</scope>
    <source>
        <strain>cv. Nisqually</strain>
    </source>
</reference>
<reference key="2">
    <citation type="journal article" date="2010" name="Cell. Mol. Life Sci.">
        <title>Genome-wide analysis of plant metal transporters, with an emphasis on poplar.</title>
        <authorList>
            <person name="Migeon A."/>
            <person name="Blaudez D."/>
            <person name="Wilkins O."/>
            <person name="Montanini B."/>
            <person name="Campbell M.M."/>
            <person name="Richaud P."/>
            <person name="Thomine S."/>
            <person name="Chalot M."/>
        </authorList>
    </citation>
    <scope>GENE FAMILY</scope>
    <scope>NOMENCLATURE</scope>
</reference>
<reference key="3">
    <citation type="journal article" date="2022" name="Mol. Biol. Evol.">
        <title>Duplication of NRAMP3 gene in poplars generated two homologous transporters with distinct functions.</title>
        <authorList>
            <person name="Pottier M."/>
            <person name="Le Thi V.A."/>
            <person name="Primard-Brisset C."/>
            <person name="Marion J."/>
            <person name="Bianchi M.W."/>
            <person name="Victor C."/>
            <person name="Dejardin A."/>
            <person name="Pilate G."/>
            <person name="Thomine S."/>
        </authorList>
    </citation>
    <scope>FUNCTION</scope>
    <scope>CATALYTIC ACTIVITY</scope>
    <scope>TISSUE SPECIFICITY</scope>
    <scope>SUBCELLULAR LOCATION</scope>
    <scope>GENE FAMILY</scope>
    <source>
        <strain>cv. Nisqually</strain>
    </source>
</reference>
<keyword id="KW-0333">Golgi apparatus</keyword>
<keyword id="KW-0406">Ion transport</keyword>
<keyword id="KW-0472">Membrane</keyword>
<keyword id="KW-1185">Reference proteome</keyword>
<keyword id="KW-0812">Transmembrane</keyword>
<keyword id="KW-1133">Transmembrane helix</keyword>
<keyword id="KW-0813">Transport</keyword>
<name>NRP31_POPTR</name>
<feature type="chain" id="PRO_0000457938" description="Metal transporter Nramp3.1">
    <location>
        <begin position="1"/>
        <end position="500"/>
    </location>
</feature>
<feature type="transmembrane region" description="Helical; Name=1" evidence="1">
    <location>
        <begin position="51"/>
        <end position="71"/>
    </location>
</feature>
<feature type="transmembrane region" description="Helical; Name=2" evidence="1">
    <location>
        <begin position="79"/>
        <end position="99"/>
    </location>
</feature>
<feature type="transmembrane region" description="Helical; Name=3" evidence="1">
    <location>
        <begin position="128"/>
        <end position="148"/>
    </location>
</feature>
<feature type="transmembrane region" description="Helical; Name=4" evidence="1">
    <location>
        <begin position="160"/>
        <end position="180"/>
    </location>
</feature>
<feature type="transmembrane region" description="Helical; Name=5" evidence="1">
    <location>
        <begin position="188"/>
        <end position="208"/>
    </location>
</feature>
<feature type="transmembrane region" description="Helical; Name=6" evidence="1">
    <location>
        <begin position="234"/>
        <end position="254"/>
    </location>
</feature>
<feature type="transmembrane region" description="Helical; Name=7" evidence="1">
    <location>
        <begin position="280"/>
        <end position="300"/>
    </location>
</feature>
<feature type="transmembrane region" description="Helical; Name=8" evidence="1">
    <location>
        <begin position="322"/>
        <end position="342"/>
    </location>
</feature>
<feature type="transmembrane region" description="Helical; Name=9" evidence="1">
    <location>
        <begin position="370"/>
        <end position="390"/>
    </location>
</feature>
<feature type="transmembrane region" description="Helical; Name=10" evidence="1">
    <location>
        <begin position="401"/>
        <end position="421"/>
    </location>
</feature>
<feature type="transmembrane region" description="Helical; Name=11" evidence="1">
    <location>
        <begin position="439"/>
        <end position="459"/>
    </location>
</feature>
<feature type="transmembrane region" description="Helical; Name=12" evidence="1">
    <location>
        <begin position="467"/>
        <end position="487"/>
    </location>
</feature>
<organism>
    <name type="scientific">Populus trichocarpa</name>
    <name type="common">Western balsam poplar</name>
    <name type="synonym">Populus balsamifera subsp. trichocarpa</name>
    <dbReference type="NCBI Taxonomy" id="3694"/>
    <lineage>
        <taxon>Eukaryota</taxon>
        <taxon>Viridiplantae</taxon>
        <taxon>Streptophyta</taxon>
        <taxon>Embryophyta</taxon>
        <taxon>Tracheophyta</taxon>
        <taxon>Spermatophyta</taxon>
        <taxon>Magnoliopsida</taxon>
        <taxon>eudicotyledons</taxon>
        <taxon>Gunneridae</taxon>
        <taxon>Pentapetalae</taxon>
        <taxon>rosids</taxon>
        <taxon>fabids</taxon>
        <taxon>Malpighiales</taxon>
        <taxon>Salicaceae</taxon>
        <taxon>Saliceae</taxon>
        <taxon>Populus</taxon>
    </lineage>
</organism>
<sequence>MPSPEEDPQPLLKDQEETAYDSDGKVLSFGIDYDTESGGSTVVPSFSWRKLWLFTGPGFLMCIAFLDPGNLEGDLQAGAIAGYSLLWLLLWATAMGLLVQLLSARLGVATGRHLAELCREEYPTWARMILWIMAELALIGADIQEVIGSAIAIQILSNGVLPLWAGVIITASDCFIFLFLENYGVRKLEAAFGILIGIMAVTFAWMFADAKPSAPELFLGILIPKLSSKTIKQAVGVVGCIIMPHNVFLHSALVQSREIDHNKKGQVQEALRYYSIESTAALAISFMINLFVTTIFAKGFHGTELANSIGLVNAGQYLQDKYGGGFFPILYIWGIGLLAAGQSSTITGTYAGQFIMGGFLNLGLKKWLRALITRSCAIIPTIIVALVFDTSEDSLDVLNEWLNMLQSIQIPFALIPLLCLVSKEQIMGTFTVGPILKMVSWLVAALVMLINGYLLLDFFSNEVTGVVFTTVVCAFTGAYVTFIIYLISREVTISTWYCPT</sequence>
<protein>
    <recommendedName>
        <fullName evidence="3 4">Metal transporter Nramp3.1</fullName>
        <shortName evidence="4">PotriNRAMP3.1</shortName>
        <shortName evidence="3">PtNRAMP3.1</shortName>
    </recommendedName>
    <alternativeName>
        <fullName evidence="5">Natural resistance-associated macrophage protein 3.1</fullName>
    </alternativeName>
</protein>
<accession>B9NAE4</accession>
<dbReference type="EMBL" id="CM009296">
    <property type="protein sequence ID" value="PNT27203.1"/>
    <property type="molecule type" value="Genomic_DNA"/>
</dbReference>
<dbReference type="SMR" id="B9NAE4"/>
<dbReference type="FunCoup" id="B9NAE4">
    <property type="interactions" value="2742"/>
</dbReference>
<dbReference type="STRING" id="3694.B9NAE4"/>
<dbReference type="EnsemblPlants" id="Potri.007G050700.1.v4.1">
    <property type="protein sequence ID" value="Potri.007G050700.1.v4.1"/>
    <property type="gene ID" value="Potri.007G050700.v4.1"/>
</dbReference>
<dbReference type="GeneID" id="18101156"/>
<dbReference type="Gramene" id="Potri.007G050700.1.v4.1">
    <property type="protein sequence ID" value="Potri.007G050700.1.v4.1"/>
    <property type="gene ID" value="Potri.007G050700.v4.1"/>
</dbReference>
<dbReference type="KEGG" id="pop:18101156"/>
<dbReference type="eggNOG" id="KOG1291">
    <property type="taxonomic scope" value="Eukaryota"/>
</dbReference>
<dbReference type="HOGENOM" id="CLU_020088_5_1_1"/>
<dbReference type="InParanoid" id="B9NAE4"/>
<dbReference type="OMA" id="STYLVWT"/>
<dbReference type="OrthoDB" id="409173at2759"/>
<dbReference type="Proteomes" id="UP000006729">
    <property type="component" value="Chromosome 7"/>
</dbReference>
<dbReference type="GO" id="GO:0032588">
    <property type="term" value="C:trans-Golgi network membrane"/>
    <property type="evidence" value="ECO:0000314"/>
    <property type="project" value="UniProtKB"/>
</dbReference>
<dbReference type="GO" id="GO:0005774">
    <property type="term" value="C:vacuolar membrane"/>
    <property type="evidence" value="ECO:0000318"/>
    <property type="project" value="GO_Central"/>
</dbReference>
<dbReference type="GO" id="GO:0015086">
    <property type="term" value="F:cadmium ion transmembrane transporter activity"/>
    <property type="evidence" value="ECO:0000318"/>
    <property type="project" value="GO_Central"/>
</dbReference>
<dbReference type="GO" id="GO:0005384">
    <property type="term" value="F:manganese ion transmembrane transporter activity"/>
    <property type="evidence" value="ECO:0000314"/>
    <property type="project" value="UniProtKB"/>
</dbReference>
<dbReference type="GO" id="GO:0046873">
    <property type="term" value="F:metal ion transmembrane transporter activity"/>
    <property type="evidence" value="ECO:0000314"/>
    <property type="project" value="UniProtKB"/>
</dbReference>
<dbReference type="GO" id="GO:0042742">
    <property type="term" value="P:defense response to bacterium"/>
    <property type="evidence" value="ECO:0000318"/>
    <property type="project" value="GO_Central"/>
</dbReference>
<dbReference type="GO" id="GO:0006879">
    <property type="term" value="P:intracellular iron ion homeostasis"/>
    <property type="evidence" value="ECO:0000314"/>
    <property type="project" value="UniProtKB"/>
</dbReference>
<dbReference type="GO" id="GO:0030026">
    <property type="term" value="P:intracellular manganese ion homeostasis"/>
    <property type="evidence" value="ECO:0000314"/>
    <property type="project" value="UniProtKB"/>
</dbReference>
<dbReference type="GO" id="GO:0034755">
    <property type="term" value="P:iron ion transmembrane transport"/>
    <property type="evidence" value="ECO:0000318"/>
    <property type="project" value="GO_Central"/>
</dbReference>
<dbReference type="GO" id="GO:0006826">
    <property type="term" value="P:iron ion transport"/>
    <property type="evidence" value="ECO:0000314"/>
    <property type="project" value="UniProtKB"/>
</dbReference>
<dbReference type="GO" id="GO:0071421">
    <property type="term" value="P:manganese ion transmembrane transport"/>
    <property type="evidence" value="ECO:0000314"/>
    <property type="project" value="UniProtKB"/>
</dbReference>
<dbReference type="GO" id="GO:0006828">
    <property type="term" value="P:manganese ion transport"/>
    <property type="evidence" value="ECO:0000318"/>
    <property type="project" value="GO_Central"/>
</dbReference>
<dbReference type="GO" id="GO:2000379">
    <property type="term" value="P:positive regulation of reactive oxygen species metabolic process"/>
    <property type="evidence" value="ECO:0000318"/>
    <property type="project" value="GO_Central"/>
</dbReference>
<dbReference type="HAMAP" id="MF_00221">
    <property type="entry name" value="NRAMP"/>
    <property type="match status" value="1"/>
</dbReference>
<dbReference type="InterPro" id="IPR001046">
    <property type="entry name" value="NRAMP_fam"/>
</dbReference>
<dbReference type="NCBIfam" id="TIGR01197">
    <property type="entry name" value="nramp"/>
    <property type="match status" value="1"/>
</dbReference>
<dbReference type="NCBIfam" id="NF037982">
    <property type="entry name" value="Nramp_1"/>
    <property type="match status" value="1"/>
</dbReference>
<dbReference type="PANTHER" id="PTHR11706:SF109">
    <property type="entry name" value="METAL TRANSPORTER NRAMP3"/>
    <property type="match status" value="1"/>
</dbReference>
<dbReference type="PANTHER" id="PTHR11706">
    <property type="entry name" value="SOLUTE CARRIER PROTEIN FAMILY 11 MEMBER"/>
    <property type="match status" value="1"/>
</dbReference>
<dbReference type="Pfam" id="PF01566">
    <property type="entry name" value="Nramp"/>
    <property type="match status" value="1"/>
</dbReference>
<dbReference type="PRINTS" id="PR00447">
    <property type="entry name" value="NATRESASSCMP"/>
</dbReference>
<comment type="function">
    <text evidence="2">Divalent metal transporter (PubMed:35700212). Can transport manganese (Mn) and iron (Fe) (PubMed:35700212). Involved in the control of cell-to-cell transport of manganese (Mn) between organs and tissues to monitor Mn homeostasis (PubMed:35700212).</text>
</comment>
<comment type="catalytic activity">
    <reaction evidence="2">
        <text>Mn(2+)(in) = Mn(2+)(out)</text>
        <dbReference type="Rhea" id="RHEA:28699"/>
        <dbReference type="ChEBI" id="CHEBI:29035"/>
    </reaction>
</comment>
<comment type="catalytic activity">
    <reaction evidence="2">
        <text>Fe(2+)(in) = Fe(2+)(out)</text>
        <dbReference type="Rhea" id="RHEA:28486"/>
        <dbReference type="ChEBI" id="CHEBI:29033"/>
    </reaction>
</comment>
<comment type="subcellular location">
    <subcellularLocation>
        <location evidence="2">Golgi apparatus</location>
        <location evidence="2">trans-Golgi network membrane</location>
        <topology evidence="1">Multi-pass membrane protein</topology>
    </subcellularLocation>
    <text evidence="2">Localized to intracellular punctuate structures.</text>
</comment>
<comment type="tissue specificity">
    <text evidence="2">Expressed in roots, stems, buds and leaves.</text>
</comment>
<comment type="similarity">
    <text evidence="5">Belongs to the NRAMP (TC 2.A.55) family.</text>
</comment>
<evidence type="ECO:0000255" key="1"/>
<evidence type="ECO:0000269" key="2">
    <source>
    </source>
</evidence>
<evidence type="ECO:0000303" key="3">
    <source>
    </source>
</evidence>
<evidence type="ECO:0000303" key="4">
    <source>
    </source>
</evidence>
<evidence type="ECO:0000305" key="5"/>